<comment type="function">
    <text evidence="2">Apoprotein for the two 4Fe-4S centers FA and FB of photosystem I (PSI); essential for photochemical activity. FB is the terminal electron acceptor of PSI, donating electrons to ferredoxin. The C-terminus interacts with PsaA/B/D and helps assemble the protein into the PSI complex. Required for binding of PsaD and PsaE to PSI. PSI is a plastocyanin-ferredoxin oxidoreductase, converting photonic excitation into a charge separation, which transfers an electron from the donor P700 chlorophyll pair to the spectroscopically characterized acceptors A0, A1, FX, FA and FB in turn.</text>
</comment>
<comment type="catalytic activity">
    <reaction evidence="2">
        <text>reduced [plastocyanin] + hnu + oxidized [2Fe-2S]-[ferredoxin] = oxidized [plastocyanin] + reduced [2Fe-2S]-[ferredoxin]</text>
        <dbReference type="Rhea" id="RHEA:30407"/>
        <dbReference type="Rhea" id="RHEA-COMP:10000"/>
        <dbReference type="Rhea" id="RHEA-COMP:10001"/>
        <dbReference type="Rhea" id="RHEA-COMP:10039"/>
        <dbReference type="Rhea" id="RHEA-COMP:10040"/>
        <dbReference type="ChEBI" id="CHEBI:29036"/>
        <dbReference type="ChEBI" id="CHEBI:30212"/>
        <dbReference type="ChEBI" id="CHEBI:33737"/>
        <dbReference type="ChEBI" id="CHEBI:33738"/>
        <dbReference type="ChEBI" id="CHEBI:49552"/>
        <dbReference type="EC" id="1.97.1.12"/>
    </reaction>
</comment>
<comment type="cofactor">
    <cofactor evidence="2">
        <name>[4Fe-4S] cluster</name>
        <dbReference type="ChEBI" id="CHEBI:49883"/>
    </cofactor>
    <text evidence="2">Binds 2 [4Fe-4S] clusters. Cluster 2 is most probably the spectroscopically characterized electron acceptor FA and cluster 1 is most probably FB.</text>
</comment>
<comment type="subunit">
    <text evidence="2">The eukaryotic PSI reaction center is composed of at least 11 subunits.</text>
</comment>
<comment type="subcellular location">
    <subcellularLocation>
        <location evidence="1">Plastid thylakoid membrane</location>
        <topology evidence="2">Peripheral membrane protein</topology>
        <orientation evidence="2">Stromal side</orientation>
    </subcellularLocation>
</comment>
<comment type="caution">
    <text evidence="3">Young tissue from this organism is photosynthetic and contains some thylakoids, although the photosynthetic activity does not exceed the light compensation point.</text>
</comment>
<dbReference type="EC" id="1.97.1.12" evidence="2"/>
<dbReference type="EMBL" id="AM711640">
    <property type="protein sequence ID" value="CAM98438.1"/>
    <property type="molecule type" value="Genomic_DNA"/>
</dbReference>
<dbReference type="RefSeq" id="YP_001430151.1">
    <property type="nucleotide sequence ID" value="NC_009766.1"/>
</dbReference>
<dbReference type="SMR" id="A7M9B0"/>
<dbReference type="GeneID" id="5536662"/>
<dbReference type="GO" id="GO:0009534">
    <property type="term" value="C:chloroplast thylakoid"/>
    <property type="evidence" value="ECO:0007669"/>
    <property type="project" value="TreeGrafter"/>
</dbReference>
<dbReference type="GO" id="GO:0009522">
    <property type="term" value="C:photosystem I"/>
    <property type="evidence" value="ECO:0007669"/>
    <property type="project" value="UniProtKB-KW"/>
</dbReference>
<dbReference type="GO" id="GO:0055035">
    <property type="term" value="C:plastid thylakoid membrane"/>
    <property type="evidence" value="ECO:0007669"/>
    <property type="project" value="UniProtKB-SubCell"/>
</dbReference>
<dbReference type="GO" id="GO:0051539">
    <property type="term" value="F:4 iron, 4 sulfur cluster binding"/>
    <property type="evidence" value="ECO:0007669"/>
    <property type="project" value="UniProtKB-KW"/>
</dbReference>
<dbReference type="GO" id="GO:0009055">
    <property type="term" value="F:electron transfer activity"/>
    <property type="evidence" value="ECO:0007669"/>
    <property type="project" value="UniProtKB-UniRule"/>
</dbReference>
<dbReference type="GO" id="GO:0046872">
    <property type="term" value="F:metal ion binding"/>
    <property type="evidence" value="ECO:0007669"/>
    <property type="project" value="UniProtKB-KW"/>
</dbReference>
<dbReference type="GO" id="GO:0016491">
    <property type="term" value="F:oxidoreductase activity"/>
    <property type="evidence" value="ECO:0007669"/>
    <property type="project" value="UniProtKB-KW"/>
</dbReference>
<dbReference type="GO" id="GO:0009773">
    <property type="term" value="P:photosynthetic electron transport in photosystem I"/>
    <property type="evidence" value="ECO:0007669"/>
    <property type="project" value="InterPro"/>
</dbReference>
<dbReference type="FunFam" id="3.30.70.20:FF:000001">
    <property type="entry name" value="Photosystem I iron-sulfur center"/>
    <property type="match status" value="1"/>
</dbReference>
<dbReference type="Gene3D" id="3.30.70.20">
    <property type="match status" value="1"/>
</dbReference>
<dbReference type="HAMAP" id="MF_01303">
    <property type="entry name" value="PSI_PsaC"/>
    <property type="match status" value="1"/>
</dbReference>
<dbReference type="InterPro" id="IPR017896">
    <property type="entry name" value="4Fe4S_Fe-S-bd"/>
</dbReference>
<dbReference type="InterPro" id="IPR017900">
    <property type="entry name" value="4Fe4S_Fe_S_CS"/>
</dbReference>
<dbReference type="InterPro" id="IPR050157">
    <property type="entry name" value="PSI_iron-sulfur_center"/>
</dbReference>
<dbReference type="InterPro" id="IPR017491">
    <property type="entry name" value="PSI_PsaC"/>
</dbReference>
<dbReference type="NCBIfam" id="TIGR03048">
    <property type="entry name" value="PS_I_psaC"/>
    <property type="match status" value="1"/>
</dbReference>
<dbReference type="PANTHER" id="PTHR24960:SF79">
    <property type="entry name" value="PHOTOSYSTEM I IRON-SULFUR CENTER"/>
    <property type="match status" value="1"/>
</dbReference>
<dbReference type="PANTHER" id="PTHR24960">
    <property type="entry name" value="PHOTOSYSTEM I IRON-SULFUR CENTER-RELATED"/>
    <property type="match status" value="1"/>
</dbReference>
<dbReference type="Pfam" id="PF14697">
    <property type="entry name" value="Fer4_21"/>
    <property type="match status" value="1"/>
</dbReference>
<dbReference type="SUPFAM" id="SSF54862">
    <property type="entry name" value="4Fe-4S ferredoxins"/>
    <property type="match status" value="1"/>
</dbReference>
<dbReference type="PROSITE" id="PS00198">
    <property type="entry name" value="4FE4S_FER_1"/>
    <property type="match status" value="2"/>
</dbReference>
<dbReference type="PROSITE" id="PS51379">
    <property type="entry name" value="4FE4S_FER_2"/>
    <property type="match status" value="2"/>
</dbReference>
<protein>
    <recommendedName>
        <fullName evidence="2">Photosystem I iron-sulfur center</fullName>
        <ecNumber evidence="2">1.97.1.12</ecNumber>
    </recommendedName>
    <alternativeName>
        <fullName evidence="2">9 kDa polypeptide</fullName>
    </alternativeName>
    <alternativeName>
        <fullName evidence="2">PSI-C</fullName>
    </alternativeName>
    <alternativeName>
        <fullName evidence="2">Photosystem I subunit VII</fullName>
    </alternativeName>
    <alternativeName>
        <fullName evidence="2">PsaC</fullName>
    </alternativeName>
</protein>
<feature type="chain" id="PRO_0000322038" description="Photosystem I iron-sulfur center">
    <location>
        <begin position="1"/>
        <end position="81"/>
    </location>
</feature>
<feature type="domain" description="4Fe-4S ferredoxin-type 1" evidence="2">
    <location>
        <begin position="2"/>
        <end position="31"/>
    </location>
</feature>
<feature type="domain" description="4Fe-4S ferredoxin-type 2" evidence="2">
    <location>
        <begin position="39"/>
        <end position="68"/>
    </location>
</feature>
<feature type="binding site" evidence="2">
    <location>
        <position position="11"/>
    </location>
    <ligand>
        <name>[4Fe-4S] cluster</name>
        <dbReference type="ChEBI" id="CHEBI:49883"/>
        <label>1</label>
    </ligand>
</feature>
<feature type="binding site" evidence="2">
    <location>
        <position position="14"/>
    </location>
    <ligand>
        <name>[4Fe-4S] cluster</name>
        <dbReference type="ChEBI" id="CHEBI:49883"/>
        <label>1</label>
    </ligand>
</feature>
<feature type="binding site" evidence="2">
    <location>
        <position position="17"/>
    </location>
    <ligand>
        <name>[4Fe-4S] cluster</name>
        <dbReference type="ChEBI" id="CHEBI:49883"/>
        <label>1</label>
    </ligand>
</feature>
<feature type="binding site" evidence="2">
    <location>
        <position position="21"/>
    </location>
    <ligand>
        <name>[4Fe-4S] cluster</name>
        <dbReference type="ChEBI" id="CHEBI:49883"/>
        <label>2</label>
    </ligand>
</feature>
<feature type="binding site" evidence="2">
    <location>
        <position position="48"/>
    </location>
    <ligand>
        <name>[4Fe-4S] cluster</name>
        <dbReference type="ChEBI" id="CHEBI:49883"/>
        <label>2</label>
    </ligand>
</feature>
<feature type="binding site" evidence="2">
    <location>
        <position position="51"/>
    </location>
    <ligand>
        <name>[4Fe-4S] cluster</name>
        <dbReference type="ChEBI" id="CHEBI:49883"/>
        <label>2</label>
    </ligand>
</feature>
<feature type="binding site" evidence="2">
    <location>
        <position position="54"/>
    </location>
    <ligand>
        <name>[4Fe-4S] cluster</name>
        <dbReference type="ChEBI" id="CHEBI:49883"/>
        <label>2</label>
    </ligand>
</feature>
<feature type="binding site" evidence="2">
    <location>
        <position position="58"/>
    </location>
    <ligand>
        <name>[4Fe-4S] cluster</name>
        <dbReference type="ChEBI" id="CHEBI:49883"/>
        <label>1</label>
    </ligand>
</feature>
<organism>
    <name type="scientific">Cuscuta reflexa</name>
    <name type="common">Southern Asian dodder</name>
    <dbReference type="NCBI Taxonomy" id="4129"/>
    <lineage>
        <taxon>Eukaryota</taxon>
        <taxon>Viridiplantae</taxon>
        <taxon>Streptophyta</taxon>
        <taxon>Embryophyta</taxon>
        <taxon>Tracheophyta</taxon>
        <taxon>Spermatophyta</taxon>
        <taxon>Magnoliopsida</taxon>
        <taxon>eudicotyledons</taxon>
        <taxon>Gunneridae</taxon>
        <taxon>Pentapetalae</taxon>
        <taxon>asterids</taxon>
        <taxon>lamiids</taxon>
        <taxon>Solanales</taxon>
        <taxon>Convolvulaceae</taxon>
        <taxon>Cuscuteae</taxon>
        <taxon>Cuscuta</taxon>
        <taxon>Cuscuta subgen. Monogynella</taxon>
    </lineage>
</organism>
<evidence type="ECO:0000250" key="1"/>
<evidence type="ECO:0000255" key="2">
    <source>
        <dbReference type="HAMAP-Rule" id="MF_01303"/>
    </source>
</evidence>
<evidence type="ECO:0000305" key="3"/>
<proteinExistence type="inferred from homology"/>
<name>PSAC_CUSRE</name>
<reference key="1">
    <citation type="journal article" date="2007" name="BMC Plant Biol.">
        <title>Complete DNA sequences of the plastid genomes of two parasitic flowering plant species, Cuscuta reflexa and Cuscuta gronovii.</title>
        <authorList>
            <person name="Funk H.T."/>
            <person name="Berg S."/>
            <person name="Krupinska K."/>
            <person name="Maier U.-G."/>
            <person name="Krause K."/>
        </authorList>
    </citation>
    <scope>NUCLEOTIDE SEQUENCE [LARGE SCALE GENOMIC DNA]</scope>
</reference>
<gene>
    <name evidence="2" type="primary">psaC</name>
</gene>
<sequence>MSHSVKIYDTCIGCTQCVRACPTDVLEMIPWDRCKAKQIASAPRTEDCVGCKRCESACPTDFLSVRVYLGHETTRSMGLTY</sequence>
<geneLocation type="plastid"/>
<keyword id="KW-0004">4Fe-4S</keyword>
<keyword id="KW-0249">Electron transport</keyword>
<keyword id="KW-0408">Iron</keyword>
<keyword id="KW-0411">Iron-sulfur</keyword>
<keyword id="KW-0472">Membrane</keyword>
<keyword id="KW-0479">Metal-binding</keyword>
<keyword id="KW-0560">Oxidoreductase</keyword>
<keyword id="KW-0602">Photosynthesis</keyword>
<keyword id="KW-0603">Photosystem I</keyword>
<keyword id="KW-0934">Plastid</keyword>
<keyword id="KW-0677">Repeat</keyword>
<keyword id="KW-0793">Thylakoid</keyword>
<keyword id="KW-0813">Transport</keyword>
<accession>A7M9B0</accession>